<comment type="function">
    <text evidence="1">Catalyzes the condensation of iminoaspartate with dihydroxyacetone phosphate to form quinolinate.</text>
</comment>
<comment type="catalytic activity">
    <reaction evidence="1">
        <text>iminosuccinate + dihydroxyacetone phosphate = quinolinate + phosphate + 2 H2O + H(+)</text>
        <dbReference type="Rhea" id="RHEA:25888"/>
        <dbReference type="ChEBI" id="CHEBI:15377"/>
        <dbReference type="ChEBI" id="CHEBI:15378"/>
        <dbReference type="ChEBI" id="CHEBI:29959"/>
        <dbReference type="ChEBI" id="CHEBI:43474"/>
        <dbReference type="ChEBI" id="CHEBI:57642"/>
        <dbReference type="ChEBI" id="CHEBI:77875"/>
        <dbReference type="EC" id="2.5.1.72"/>
    </reaction>
    <physiologicalReaction direction="left-to-right" evidence="1">
        <dbReference type="Rhea" id="RHEA:25889"/>
    </physiologicalReaction>
</comment>
<comment type="cofactor">
    <cofactor evidence="1">
        <name>[4Fe-4S] cluster</name>
        <dbReference type="ChEBI" id="CHEBI:49883"/>
    </cofactor>
    <text evidence="1">Binds 1 [4Fe-4S] cluster per subunit.</text>
</comment>
<comment type="pathway">
    <text evidence="1">Cofactor biosynthesis; NAD(+) biosynthesis; quinolinate from iminoaspartate: step 1/1.</text>
</comment>
<comment type="subcellular location">
    <subcellularLocation>
        <location evidence="1">Cytoplasm</location>
    </subcellularLocation>
</comment>
<comment type="similarity">
    <text evidence="1">Belongs to the quinolinate synthase family. Type 1 subfamily.</text>
</comment>
<evidence type="ECO:0000255" key="1">
    <source>
        <dbReference type="HAMAP-Rule" id="MF_00567"/>
    </source>
</evidence>
<dbReference type="EC" id="2.5.1.72" evidence="1"/>
<dbReference type="EMBL" id="AM421808">
    <property type="protein sequence ID" value="CAM10943.1"/>
    <property type="molecule type" value="Genomic_DNA"/>
</dbReference>
<dbReference type="RefSeq" id="WP_002220343.1">
    <property type="nucleotide sequence ID" value="NC_008767.1"/>
</dbReference>
<dbReference type="SMR" id="A1KVN9"/>
<dbReference type="KEGG" id="nmc:NMC1772"/>
<dbReference type="HOGENOM" id="CLU_047382_1_0_4"/>
<dbReference type="UniPathway" id="UPA00253">
    <property type="reaction ID" value="UER00327"/>
</dbReference>
<dbReference type="Proteomes" id="UP000002286">
    <property type="component" value="Chromosome"/>
</dbReference>
<dbReference type="GO" id="GO:0005829">
    <property type="term" value="C:cytosol"/>
    <property type="evidence" value="ECO:0007669"/>
    <property type="project" value="TreeGrafter"/>
</dbReference>
<dbReference type="GO" id="GO:0051539">
    <property type="term" value="F:4 iron, 4 sulfur cluster binding"/>
    <property type="evidence" value="ECO:0007669"/>
    <property type="project" value="UniProtKB-KW"/>
</dbReference>
<dbReference type="GO" id="GO:0046872">
    <property type="term" value="F:metal ion binding"/>
    <property type="evidence" value="ECO:0007669"/>
    <property type="project" value="UniProtKB-KW"/>
</dbReference>
<dbReference type="GO" id="GO:0008987">
    <property type="term" value="F:quinolinate synthetase A activity"/>
    <property type="evidence" value="ECO:0007669"/>
    <property type="project" value="UniProtKB-UniRule"/>
</dbReference>
<dbReference type="GO" id="GO:0034628">
    <property type="term" value="P:'de novo' NAD biosynthetic process from L-aspartate"/>
    <property type="evidence" value="ECO:0007669"/>
    <property type="project" value="TreeGrafter"/>
</dbReference>
<dbReference type="FunFam" id="3.40.50.10800:FF:000001">
    <property type="entry name" value="Quinolinate synthase A"/>
    <property type="match status" value="1"/>
</dbReference>
<dbReference type="FunFam" id="3.40.50.10800:FF:000003">
    <property type="entry name" value="Quinolinate synthase A"/>
    <property type="match status" value="1"/>
</dbReference>
<dbReference type="Gene3D" id="3.40.50.10800">
    <property type="entry name" value="NadA-like"/>
    <property type="match status" value="3"/>
</dbReference>
<dbReference type="HAMAP" id="MF_00567">
    <property type="entry name" value="NadA_type1"/>
    <property type="match status" value="1"/>
</dbReference>
<dbReference type="InterPro" id="IPR003473">
    <property type="entry name" value="NadA"/>
</dbReference>
<dbReference type="InterPro" id="IPR036094">
    <property type="entry name" value="NadA_sf"/>
</dbReference>
<dbReference type="InterPro" id="IPR023513">
    <property type="entry name" value="Quinolinate_synth_A_type1"/>
</dbReference>
<dbReference type="NCBIfam" id="TIGR00550">
    <property type="entry name" value="nadA"/>
    <property type="match status" value="1"/>
</dbReference>
<dbReference type="NCBIfam" id="NF006877">
    <property type="entry name" value="PRK09375.1-1"/>
    <property type="match status" value="1"/>
</dbReference>
<dbReference type="NCBIfam" id="NF006878">
    <property type="entry name" value="PRK09375.1-2"/>
    <property type="match status" value="1"/>
</dbReference>
<dbReference type="PANTHER" id="PTHR30573:SF0">
    <property type="entry name" value="QUINOLINATE SYNTHASE, CHLOROPLASTIC"/>
    <property type="match status" value="1"/>
</dbReference>
<dbReference type="PANTHER" id="PTHR30573">
    <property type="entry name" value="QUINOLINATE SYNTHETASE A"/>
    <property type="match status" value="1"/>
</dbReference>
<dbReference type="Pfam" id="PF02445">
    <property type="entry name" value="NadA"/>
    <property type="match status" value="1"/>
</dbReference>
<dbReference type="SUPFAM" id="SSF142754">
    <property type="entry name" value="NadA-like"/>
    <property type="match status" value="1"/>
</dbReference>
<feature type="chain" id="PRO_1000061144" description="Quinolinate synthase">
    <location>
        <begin position="1"/>
        <end position="370"/>
    </location>
</feature>
<feature type="binding site" evidence="1">
    <location>
        <position position="62"/>
    </location>
    <ligand>
        <name>iminosuccinate</name>
        <dbReference type="ChEBI" id="CHEBI:77875"/>
    </ligand>
</feature>
<feature type="binding site" evidence="1">
    <location>
        <position position="83"/>
    </location>
    <ligand>
        <name>iminosuccinate</name>
        <dbReference type="ChEBI" id="CHEBI:77875"/>
    </ligand>
</feature>
<feature type="binding site" evidence="1">
    <location>
        <position position="128"/>
    </location>
    <ligand>
        <name>[4Fe-4S] cluster</name>
        <dbReference type="ChEBI" id="CHEBI:49883"/>
    </ligand>
</feature>
<feature type="binding site" evidence="1">
    <location>
        <begin position="154"/>
        <end position="156"/>
    </location>
    <ligand>
        <name>iminosuccinate</name>
        <dbReference type="ChEBI" id="CHEBI:77875"/>
    </ligand>
</feature>
<feature type="binding site" evidence="1">
    <location>
        <position position="171"/>
    </location>
    <ligand>
        <name>iminosuccinate</name>
        <dbReference type="ChEBI" id="CHEBI:77875"/>
    </ligand>
</feature>
<feature type="binding site" evidence="1">
    <location>
        <position position="215"/>
    </location>
    <ligand>
        <name>[4Fe-4S] cluster</name>
        <dbReference type="ChEBI" id="CHEBI:49883"/>
    </ligand>
</feature>
<feature type="binding site" evidence="1">
    <location>
        <begin position="241"/>
        <end position="243"/>
    </location>
    <ligand>
        <name>iminosuccinate</name>
        <dbReference type="ChEBI" id="CHEBI:77875"/>
    </ligand>
</feature>
<feature type="binding site" evidence="1">
    <location>
        <position position="258"/>
    </location>
    <ligand>
        <name>iminosuccinate</name>
        <dbReference type="ChEBI" id="CHEBI:77875"/>
    </ligand>
</feature>
<feature type="binding site" evidence="1">
    <location>
        <position position="312"/>
    </location>
    <ligand>
        <name>[4Fe-4S] cluster</name>
        <dbReference type="ChEBI" id="CHEBI:49883"/>
    </ligand>
</feature>
<keyword id="KW-0004">4Fe-4S</keyword>
<keyword id="KW-0963">Cytoplasm</keyword>
<keyword id="KW-0408">Iron</keyword>
<keyword id="KW-0411">Iron-sulfur</keyword>
<keyword id="KW-0479">Metal-binding</keyword>
<keyword id="KW-0662">Pyridine nucleotide biosynthesis</keyword>
<keyword id="KW-0808">Transferase</keyword>
<gene>
    <name evidence="1" type="primary">nadA</name>
    <name type="ordered locus">NMC1772</name>
</gene>
<proteinExistence type="inferred from homology"/>
<organism>
    <name type="scientific">Neisseria meningitidis serogroup C / serotype 2a (strain ATCC 700532 / DSM 15464 / FAM18)</name>
    <dbReference type="NCBI Taxonomy" id="272831"/>
    <lineage>
        <taxon>Bacteria</taxon>
        <taxon>Pseudomonadati</taxon>
        <taxon>Pseudomonadota</taxon>
        <taxon>Betaproteobacteria</taxon>
        <taxon>Neisseriales</taxon>
        <taxon>Neisseriaceae</taxon>
        <taxon>Neisseria</taxon>
    </lineage>
</organism>
<accession>A1KVN9</accession>
<protein>
    <recommendedName>
        <fullName evidence="1">Quinolinate synthase</fullName>
        <ecNumber evidence="1">2.5.1.72</ecNumber>
    </recommendedName>
</protein>
<sequence>MQTAARRSFDYDMPLIQTPTSACQIRQAWAKVADTPDRETAGRLKDEIKALLKEKNAVLVAHYYVDPLIQDLALETGGCVGDSLEMARFGAEHEADTLVVAGVRFMGESAKILCPEKTVLMPDLEAECSLDLGCPEEAFSAFCDQHPDRTVVVYANTSAAVKARADWVVTSSVALEIVSYLKSRGEKLIWGPDRHLGDYICRETGADMLLWQGSCIVHNEFKGQELAALKAEHPDAVVLVHPESPQSVIELGDVVGSTSKLLKAAVSRPEKKFIVATDLGILHEMQKQAPDKEFIAAPTAGNGGSCKSCAFCPWMAMNSLGGIKYALTSGRNEILLDRKLGEAAKLPLQRMLDFAAGLKRGDVFNGMGPA</sequence>
<name>NADA_NEIMF</name>
<reference key="1">
    <citation type="journal article" date="2007" name="PLoS Genet.">
        <title>Meningococcal genetic variation mechanisms viewed through comparative analysis of serogroup C strain FAM18.</title>
        <authorList>
            <person name="Bentley S.D."/>
            <person name="Vernikos G.S."/>
            <person name="Snyder L.A.S."/>
            <person name="Churcher C."/>
            <person name="Arrowsmith C."/>
            <person name="Chillingworth T."/>
            <person name="Cronin A."/>
            <person name="Davis P.H."/>
            <person name="Holroyd N.E."/>
            <person name="Jagels K."/>
            <person name="Maddison M."/>
            <person name="Moule S."/>
            <person name="Rabbinowitsch E."/>
            <person name="Sharp S."/>
            <person name="Unwin L."/>
            <person name="Whitehead S."/>
            <person name="Quail M.A."/>
            <person name="Achtman M."/>
            <person name="Barrell B.G."/>
            <person name="Saunders N.J."/>
            <person name="Parkhill J."/>
        </authorList>
    </citation>
    <scope>NUCLEOTIDE SEQUENCE [LARGE SCALE GENOMIC DNA]</scope>
    <source>
        <strain>ATCC 700532 / DSM 15464 / FAM18</strain>
    </source>
</reference>